<comment type="miscellaneous">
    <text evidence="1">Partially overlaps SKP1.</text>
</comment>
<comment type="caution">
    <text evidence="2">Product of a dubious gene prediction unlikely to encode a functional protein. Because of that it is not part of the S.cerevisiae S288c complete/reference proteome set.</text>
</comment>
<reference key="1">
    <citation type="journal article" date="1997" name="Nature">
        <title>The nucleotide sequence of Saccharomyces cerevisiae chromosome IV.</title>
        <authorList>
            <person name="Jacq C."/>
            <person name="Alt-Moerbe J."/>
            <person name="Andre B."/>
            <person name="Arnold W."/>
            <person name="Bahr A."/>
            <person name="Ballesta J.P.G."/>
            <person name="Bargues M."/>
            <person name="Baron L."/>
            <person name="Becker A."/>
            <person name="Biteau N."/>
            <person name="Bloecker H."/>
            <person name="Blugeon C."/>
            <person name="Boskovic J."/>
            <person name="Brandt P."/>
            <person name="Brueckner M."/>
            <person name="Buitrago M.J."/>
            <person name="Coster F."/>
            <person name="Delaveau T."/>
            <person name="del Rey F."/>
            <person name="Dujon B."/>
            <person name="Eide L.G."/>
            <person name="Garcia-Cantalejo J.M."/>
            <person name="Goffeau A."/>
            <person name="Gomez-Peris A."/>
            <person name="Granotier C."/>
            <person name="Hanemann V."/>
            <person name="Hankeln T."/>
            <person name="Hoheisel J.D."/>
            <person name="Jaeger W."/>
            <person name="Jimenez A."/>
            <person name="Jonniaux J.-L."/>
            <person name="Kraemer C."/>
            <person name="Kuester H."/>
            <person name="Laamanen P."/>
            <person name="Legros Y."/>
            <person name="Louis E.J."/>
            <person name="Moeller-Rieker S."/>
            <person name="Monnet A."/>
            <person name="Moro M."/>
            <person name="Mueller-Auer S."/>
            <person name="Nussbaumer B."/>
            <person name="Paricio N."/>
            <person name="Paulin L."/>
            <person name="Perea J."/>
            <person name="Perez-Alonso M."/>
            <person name="Perez-Ortin J.E."/>
            <person name="Pohl T.M."/>
            <person name="Prydz H."/>
            <person name="Purnelle B."/>
            <person name="Rasmussen S.W."/>
            <person name="Remacha M.A."/>
            <person name="Revuelta J.L."/>
            <person name="Rieger M."/>
            <person name="Salom D."/>
            <person name="Saluz H.P."/>
            <person name="Saiz J.E."/>
            <person name="Saren A.-M."/>
            <person name="Schaefer M."/>
            <person name="Scharfe M."/>
            <person name="Schmidt E.R."/>
            <person name="Schneider C."/>
            <person name="Scholler P."/>
            <person name="Schwarz S."/>
            <person name="Soler-Mira A."/>
            <person name="Urrestarazu L.A."/>
            <person name="Verhasselt P."/>
            <person name="Vissers S."/>
            <person name="Voet M."/>
            <person name="Volckaert G."/>
            <person name="Wagner G."/>
            <person name="Wambutt R."/>
            <person name="Wedler E."/>
            <person name="Wedler H."/>
            <person name="Woelfl S."/>
            <person name="Harris D.E."/>
            <person name="Bowman S."/>
            <person name="Brown D."/>
            <person name="Churcher C.M."/>
            <person name="Connor R."/>
            <person name="Dedman K."/>
            <person name="Gentles S."/>
            <person name="Hamlin N."/>
            <person name="Hunt S."/>
            <person name="Jones L."/>
            <person name="McDonald S."/>
            <person name="Murphy L.D."/>
            <person name="Niblett D."/>
            <person name="Odell C."/>
            <person name="Oliver K."/>
            <person name="Rajandream M.A."/>
            <person name="Richards C."/>
            <person name="Shore L."/>
            <person name="Walsh S.V."/>
            <person name="Barrell B.G."/>
            <person name="Dietrich F.S."/>
            <person name="Mulligan J.T."/>
            <person name="Allen E."/>
            <person name="Araujo R."/>
            <person name="Aviles E."/>
            <person name="Berno A."/>
            <person name="Carpenter J."/>
            <person name="Chen E."/>
            <person name="Cherry J.M."/>
            <person name="Chung E."/>
            <person name="Duncan M."/>
            <person name="Hunicke-Smith S."/>
            <person name="Hyman R.W."/>
            <person name="Komp C."/>
            <person name="Lashkari D."/>
            <person name="Lew H."/>
            <person name="Lin D."/>
            <person name="Mosedale D."/>
            <person name="Nakahara K."/>
            <person name="Namath A."/>
            <person name="Oefner P."/>
            <person name="Oh C."/>
            <person name="Petel F.X."/>
            <person name="Roberts D."/>
            <person name="Schramm S."/>
            <person name="Schroeder M."/>
            <person name="Shogren T."/>
            <person name="Shroff N."/>
            <person name="Winant A."/>
            <person name="Yelton M.A."/>
            <person name="Botstein D."/>
            <person name="Davis R.W."/>
            <person name="Johnston M."/>
            <person name="Andrews S."/>
            <person name="Brinkman R."/>
            <person name="Cooper J."/>
            <person name="Ding H."/>
            <person name="Du Z."/>
            <person name="Favello A."/>
            <person name="Fulton L."/>
            <person name="Gattung S."/>
            <person name="Greco T."/>
            <person name="Hallsworth K."/>
            <person name="Hawkins J."/>
            <person name="Hillier L.W."/>
            <person name="Jier M."/>
            <person name="Johnson D."/>
            <person name="Johnston L."/>
            <person name="Kirsten J."/>
            <person name="Kucaba T."/>
            <person name="Langston Y."/>
            <person name="Latreille P."/>
            <person name="Le T."/>
            <person name="Mardis E."/>
            <person name="Menezes S."/>
            <person name="Miller N."/>
            <person name="Nhan M."/>
            <person name="Pauley A."/>
            <person name="Peluso D."/>
            <person name="Rifkin L."/>
            <person name="Riles L."/>
            <person name="Taich A."/>
            <person name="Trevaskis E."/>
            <person name="Vignati D."/>
            <person name="Wilcox L."/>
            <person name="Wohldman P."/>
            <person name="Vaudin M."/>
            <person name="Wilson R."/>
            <person name="Waterston R."/>
            <person name="Albermann K."/>
            <person name="Hani J."/>
            <person name="Heumann K."/>
            <person name="Kleine K."/>
            <person name="Mewes H.-W."/>
            <person name="Zollner A."/>
            <person name="Zaccaria P."/>
        </authorList>
    </citation>
    <scope>NUCLEOTIDE SEQUENCE [LARGE SCALE GENOMIC DNA]</scope>
    <source>
        <strain>ATCC 204508 / S288c</strain>
    </source>
</reference>
<reference key="2">
    <citation type="journal article" date="2014" name="G3 (Bethesda)">
        <title>The reference genome sequence of Saccharomyces cerevisiae: Then and now.</title>
        <authorList>
            <person name="Engel S.R."/>
            <person name="Dietrich F.S."/>
            <person name="Fisk D.G."/>
            <person name="Binkley G."/>
            <person name="Balakrishnan R."/>
            <person name="Costanzo M.C."/>
            <person name="Dwight S.S."/>
            <person name="Hitz B.C."/>
            <person name="Karra K."/>
            <person name="Nash R.S."/>
            <person name="Weng S."/>
            <person name="Wong E.D."/>
            <person name="Lloyd P."/>
            <person name="Skrzypek M.S."/>
            <person name="Miyasato S.R."/>
            <person name="Simison M."/>
            <person name="Cherry J.M."/>
        </authorList>
    </citation>
    <scope>GENOME REANNOTATION</scope>
    <source>
        <strain>ATCC 204508 / S288c</strain>
    </source>
</reference>
<dbReference type="EMBL" id="U32517">
    <property type="protein sequence ID" value="AAB64768.1"/>
    <property type="molecule type" value="Genomic_DNA"/>
</dbReference>
<dbReference type="PIR" id="S69747">
    <property type="entry name" value="S69747"/>
</dbReference>
<dbReference type="DIP" id="DIP-4052N"/>
<dbReference type="IntAct" id="P87288">
    <property type="interactions" value="1"/>
</dbReference>
<dbReference type="iPTMnet" id="P87288"/>
<dbReference type="PaxDb" id="4932-YDR327W"/>
<dbReference type="EnsemblFungi" id="YDR327W_mRNA">
    <property type="protein sequence ID" value="YDR327W"/>
    <property type="gene ID" value="YDR327W"/>
</dbReference>
<dbReference type="AGR" id="SGD:S000002735"/>
<dbReference type="SGD" id="S000002735">
    <property type="gene designation" value="YDR327W"/>
</dbReference>
<dbReference type="HOGENOM" id="CLU_2199044_0_0_1"/>
<dbReference type="ChiTaRS" id="YDR327W">
    <property type="organism name" value="yeast"/>
</dbReference>
<gene>
    <name type="ordered locus">YDR327W</name>
</gene>
<proteinExistence type="uncertain"/>
<sequence length="108" mass="12303">MLGYGGLTYTLHDSKPCLLIFAYLALKWRIIIGRKDHSHQRKCRLTVFSPFIFTPNGSLLLWSEVVDDIKRSSNFLGRPSPDHFSNHLAASVKQGLDVEVVCRQNNFV</sequence>
<feature type="chain" id="PRO_0000299883" description="Putative uncharacterized protein YDR327W">
    <location>
        <begin position="1"/>
        <end position="108"/>
    </location>
</feature>
<evidence type="ECO:0000305" key="1"/>
<evidence type="ECO:0000305" key="2">
    <source>
    </source>
</evidence>
<accession>P87288</accession>
<protein>
    <recommendedName>
        <fullName>Putative uncharacterized protein YDR327W</fullName>
    </recommendedName>
</protein>
<organism>
    <name type="scientific">Saccharomyces cerevisiae (strain ATCC 204508 / S288c)</name>
    <name type="common">Baker's yeast</name>
    <dbReference type="NCBI Taxonomy" id="559292"/>
    <lineage>
        <taxon>Eukaryota</taxon>
        <taxon>Fungi</taxon>
        <taxon>Dikarya</taxon>
        <taxon>Ascomycota</taxon>
        <taxon>Saccharomycotina</taxon>
        <taxon>Saccharomycetes</taxon>
        <taxon>Saccharomycetales</taxon>
        <taxon>Saccharomycetaceae</taxon>
        <taxon>Saccharomyces</taxon>
    </lineage>
</organism>
<name>YD327_YEAST</name>